<sequence length="1074" mass="117012">MIPICPVVSFTYVPSRLGEDAKMATGNYFGFTHSGAAAAAAAAQYSQQPASGVAYSHPTTVASYTVHQAPVAAHTVTAAYAPAAATVAVARPAPVAVAAAATAAAYGGYPTAHTATDYGYTQRQQEAPPPPPPATTQNYQDSYSYVRSTAPAVAYDSKQYYQQPTATAAAVAAAAQPQPSVAETYYQTAPKAGYSQGATQYTQAQQTRQVTAIKPATPSPATTTFSIYPVSSTVQPVAAAATVVPSYTQSATYSTTAVTYSGTSYSGYEAAVYSAASSYYQQQQQQQKQAAAAAAAAAATAAWTGTTFTKKAPFQNKQLKPKQPPKPPQIHYCDVCKISCAGPQTYKEHLEGQKHKKKEAALKASQNTSSSNSSTRGTQNQLRCELCDVSCTGADAYAAHIRGAKHQKVVKLHTKLGKPIPSTEPNVVSQATSSTAVSASKPTASPSSIAANNCTVNTSSVATSSMKGLTTTGNSSLNSTSNTKVSAVPTNMAAKKTSTPKINFVGGNKLQSTGNKAEDIKGTECVKSTPVTSAVQIPEVKQDTVSEPVTPASLAALQSDVQPVGHDYVEEVRNDEGKVIRFHCKLCECSFNDPNAKEMHLKGRRHRLQYKKKVNPDLQVEVKPSIRARKIQEEKMRKQMQKEEYWRRREEEERWRMEMRRYEEDMYWRRMEEEQHHWDDRRRMPDGGYPHGPPGPLGLLGVRPGMPPQPQGPAPLRRPDSSDDRYVMTKHATIYPTEEELQAVQKIVSITERALKLVSDSLSEHEKNKNKEGDDKKEGGKDRALKGVLRVGVLAKGLLLRGDRNVNLVLLCSEKPSKTLLSRIAENLPKQLAVISPEKYDIKCAVSEAAIILNSCVEPKMQVTITLTSPIIREENMREGDVTSGMVKDPPDVLDRQKCLDALAALRHAKWFQARANGLQSCVIIIRILRDLCQRVPTWSDFPSWAMELLVEKAISSASSPQSPGDALRRVFECISSGIILKGSPGLLDPCEKDPFDTLATMTDQQREDITSSAQFALRLLAFRQIHKVLGMDPLPQMSQRFNIHNNRKRRRDSDGVDGFEAEGKKDKKDYDNF</sequence>
<proteinExistence type="evidence at protein level"/>
<reference key="1">
    <citation type="journal article" date="2001" name="Gene">
        <title>Cloning and expression of the human single copy homologue of the mouse zinc finger protein zfr.</title>
        <authorList>
            <person name="Kleines M."/>
            <person name="Gaertner A."/>
            <person name="Ritter K."/>
            <person name="Schaade L."/>
        </authorList>
    </citation>
    <scope>NUCLEOTIDE SEQUENCE [MRNA]</scope>
    <scope>TISSUE SPECIFICITY</scope>
</reference>
<reference key="2">
    <citation type="journal article" date="2004" name="Nature">
        <title>The DNA sequence and comparative analysis of human chromosome 5.</title>
        <authorList>
            <person name="Schmutz J."/>
            <person name="Martin J."/>
            <person name="Terry A."/>
            <person name="Couronne O."/>
            <person name="Grimwood J."/>
            <person name="Lowry S."/>
            <person name="Gordon L.A."/>
            <person name="Scott D."/>
            <person name="Xie G."/>
            <person name="Huang W."/>
            <person name="Hellsten U."/>
            <person name="Tran-Gyamfi M."/>
            <person name="She X."/>
            <person name="Prabhakar S."/>
            <person name="Aerts A."/>
            <person name="Altherr M."/>
            <person name="Bajorek E."/>
            <person name="Black S."/>
            <person name="Branscomb E."/>
            <person name="Caoile C."/>
            <person name="Challacombe J.F."/>
            <person name="Chan Y.M."/>
            <person name="Denys M."/>
            <person name="Detter J.C."/>
            <person name="Escobar J."/>
            <person name="Flowers D."/>
            <person name="Fotopulos D."/>
            <person name="Glavina T."/>
            <person name="Gomez M."/>
            <person name="Gonzales E."/>
            <person name="Goodstein D."/>
            <person name="Grigoriev I."/>
            <person name="Groza M."/>
            <person name="Hammon N."/>
            <person name="Hawkins T."/>
            <person name="Haydu L."/>
            <person name="Israni S."/>
            <person name="Jett J."/>
            <person name="Kadner K."/>
            <person name="Kimball H."/>
            <person name="Kobayashi A."/>
            <person name="Lopez F."/>
            <person name="Lou Y."/>
            <person name="Martinez D."/>
            <person name="Medina C."/>
            <person name="Morgan J."/>
            <person name="Nandkeshwar R."/>
            <person name="Noonan J.P."/>
            <person name="Pitluck S."/>
            <person name="Pollard M."/>
            <person name="Predki P."/>
            <person name="Priest J."/>
            <person name="Ramirez L."/>
            <person name="Retterer J."/>
            <person name="Rodriguez A."/>
            <person name="Rogers S."/>
            <person name="Salamov A."/>
            <person name="Salazar A."/>
            <person name="Thayer N."/>
            <person name="Tice H."/>
            <person name="Tsai M."/>
            <person name="Ustaszewska A."/>
            <person name="Vo N."/>
            <person name="Wheeler J."/>
            <person name="Wu K."/>
            <person name="Yang J."/>
            <person name="Dickson M."/>
            <person name="Cheng J.-F."/>
            <person name="Eichler E.E."/>
            <person name="Olsen A."/>
            <person name="Pennacchio L.A."/>
            <person name="Rokhsar D.S."/>
            <person name="Richardson P."/>
            <person name="Lucas S.M."/>
            <person name="Myers R.M."/>
            <person name="Rubin E.M."/>
        </authorList>
    </citation>
    <scope>NUCLEOTIDE SEQUENCE [LARGE SCALE GENOMIC DNA]</scope>
</reference>
<reference key="3">
    <citation type="journal article" date="2004" name="Genome Res.">
        <title>The status, quality, and expansion of the NIH full-length cDNA project: the Mammalian Gene Collection (MGC).</title>
        <authorList>
            <consortium name="The MGC Project Team"/>
        </authorList>
    </citation>
    <scope>NUCLEOTIDE SEQUENCE [LARGE SCALE MRNA]</scope>
    <scope>VARIANTS ILE-461 AND THR-520</scope>
    <source>
        <tissue>Bone marrow</tissue>
        <tissue>Duodenum</tissue>
        <tissue>Eye</tissue>
        <tissue>Lung</tissue>
        <tissue>Uterus</tissue>
    </source>
</reference>
<reference key="4">
    <citation type="journal article" date="2000" name="Proc. Natl. Acad. Sci. U.S.A.">
        <title>Gene expression profiling in the human hypothalamus-pituitary-adrenal axis and full-length cDNA cloning.</title>
        <authorList>
            <person name="Hu R.-M."/>
            <person name="Han Z.-G."/>
            <person name="Song H.-D."/>
            <person name="Peng Y.-D."/>
            <person name="Huang Q.-H."/>
            <person name="Ren S.-X."/>
            <person name="Gu Y.-J."/>
            <person name="Huang C.-H."/>
            <person name="Li Y.-B."/>
            <person name="Jiang C.-L."/>
            <person name="Fu G."/>
            <person name="Zhang Q.-H."/>
            <person name="Gu B.-W."/>
            <person name="Dai M."/>
            <person name="Mao Y.-F."/>
            <person name="Gao G.-F."/>
            <person name="Rong R."/>
            <person name="Ye M."/>
            <person name="Zhou J."/>
            <person name="Xu S.-H."/>
            <person name="Gu J."/>
            <person name="Shi J.-X."/>
            <person name="Jin W.-R."/>
            <person name="Zhang C.-K."/>
            <person name="Wu T.-M."/>
            <person name="Huang G.-Y."/>
            <person name="Chen Z."/>
            <person name="Chen M.-D."/>
            <person name="Chen J.-L."/>
        </authorList>
    </citation>
    <scope>NUCLEOTIDE SEQUENCE [LARGE SCALE MRNA] OF 643-1074</scope>
    <source>
        <tissue>Pituitary</tissue>
    </source>
</reference>
<reference key="5">
    <citation type="journal article" date="2004" name="Nat. Genet.">
        <title>Complete sequencing and characterization of 21,243 full-length human cDNAs.</title>
        <authorList>
            <person name="Ota T."/>
            <person name="Suzuki Y."/>
            <person name="Nishikawa T."/>
            <person name="Otsuki T."/>
            <person name="Sugiyama T."/>
            <person name="Irie R."/>
            <person name="Wakamatsu A."/>
            <person name="Hayashi K."/>
            <person name="Sato H."/>
            <person name="Nagai K."/>
            <person name="Kimura K."/>
            <person name="Makita H."/>
            <person name="Sekine M."/>
            <person name="Obayashi M."/>
            <person name="Nishi T."/>
            <person name="Shibahara T."/>
            <person name="Tanaka T."/>
            <person name="Ishii S."/>
            <person name="Yamamoto J."/>
            <person name="Saito K."/>
            <person name="Kawai Y."/>
            <person name="Isono Y."/>
            <person name="Nakamura Y."/>
            <person name="Nagahari K."/>
            <person name="Murakami K."/>
            <person name="Yasuda T."/>
            <person name="Iwayanagi T."/>
            <person name="Wagatsuma M."/>
            <person name="Shiratori A."/>
            <person name="Sudo H."/>
            <person name="Hosoiri T."/>
            <person name="Kaku Y."/>
            <person name="Kodaira H."/>
            <person name="Kondo H."/>
            <person name="Sugawara M."/>
            <person name="Takahashi M."/>
            <person name="Kanda K."/>
            <person name="Yokoi T."/>
            <person name="Furuya T."/>
            <person name="Kikkawa E."/>
            <person name="Omura Y."/>
            <person name="Abe K."/>
            <person name="Kamihara K."/>
            <person name="Katsuta N."/>
            <person name="Sato K."/>
            <person name="Tanikawa M."/>
            <person name="Yamazaki M."/>
            <person name="Ninomiya K."/>
            <person name="Ishibashi T."/>
            <person name="Yamashita H."/>
            <person name="Murakawa K."/>
            <person name="Fujimori K."/>
            <person name="Tanai H."/>
            <person name="Kimata M."/>
            <person name="Watanabe M."/>
            <person name="Hiraoka S."/>
            <person name="Chiba Y."/>
            <person name="Ishida S."/>
            <person name="Ono Y."/>
            <person name="Takiguchi S."/>
            <person name="Watanabe S."/>
            <person name="Yosida M."/>
            <person name="Hotuta T."/>
            <person name="Kusano J."/>
            <person name="Kanehori K."/>
            <person name="Takahashi-Fujii A."/>
            <person name="Hara H."/>
            <person name="Tanase T.-O."/>
            <person name="Nomura Y."/>
            <person name="Togiya S."/>
            <person name="Komai F."/>
            <person name="Hara R."/>
            <person name="Takeuchi K."/>
            <person name="Arita M."/>
            <person name="Imose N."/>
            <person name="Musashino K."/>
            <person name="Yuuki H."/>
            <person name="Oshima A."/>
            <person name="Sasaki N."/>
            <person name="Aotsuka S."/>
            <person name="Yoshikawa Y."/>
            <person name="Matsunawa H."/>
            <person name="Ichihara T."/>
            <person name="Shiohata N."/>
            <person name="Sano S."/>
            <person name="Moriya S."/>
            <person name="Momiyama H."/>
            <person name="Satoh N."/>
            <person name="Takami S."/>
            <person name="Terashima Y."/>
            <person name="Suzuki O."/>
            <person name="Nakagawa S."/>
            <person name="Senoh A."/>
            <person name="Mizoguchi H."/>
            <person name="Goto Y."/>
            <person name="Shimizu F."/>
            <person name="Wakebe H."/>
            <person name="Hishigaki H."/>
            <person name="Watanabe T."/>
            <person name="Sugiyama A."/>
            <person name="Takemoto M."/>
            <person name="Kawakami B."/>
            <person name="Yamazaki M."/>
            <person name="Watanabe K."/>
            <person name="Kumagai A."/>
            <person name="Itakura S."/>
            <person name="Fukuzumi Y."/>
            <person name="Fujimori Y."/>
            <person name="Komiyama M."/>
            <person name="Tashiro H."/>
            <person name="Tanigami A."/>
            <person name="Fujiwara T."/>
            <person name="Ono T."/>
            <person name="Yamada K."/>
            <person name="Fujii Y."/>
            <person name="Ozaki K."/>
            <person name="Hirao M."/>
            <person name="Ohmori Y."/>
            <person name="Kawabata A."/>
            <person name="Hikiji T."/>
            <person name="Kobatake N."/>
            <person name="Inagaki H."/>
            <person name="Ikema Y."/>
            <person name="Okamoto S."/>
            <person name="Okitani R."/>
            <person name="Kawakami T."/>
            <person name="Noguchi S."/>
            <person name="Itoh T."/>
            <person name="Shigeta K."/>
            <person name="Senba T."/>
            <person name="Matsumura K."/>
            <person name="Nakajima Y."/>
            <person name="Mizuno T."/>
            <person name="Morinaga M."/>
            <person name="Sasaki M."/>
            <person name="Togashi T."/>
            <person name="Oyama M."/>
            <person name="Hata H."/>
            <person name="Watanabe M."/>
            <person name="Komatsu T."/>
            <person name="Mizushima-Sugano J."/>
            <person name="Satoh T."/>
            <person name="Shirai Y."/>
            <person name="Takahashi Y."/>
            <person name="Nakagawa K."/>
            <person name="Okumura K."/>
            <person name="Nagase T."/>
            <person name="Nomura N."/>
            <person name="Kikuchi H."/>
            <person name="Masuho Y."/>
            <person name="Yamashita R."/>
            <person name="Nakai K."/>
            <person name="Yada T."/>
            <person name="Nakamura Y."/>
            <person name="Ohara O."/>
            <person name="Isogai T."/>
            <person name="Sugano S."/>
        </authorList>
    </citation>
    <scope>NUCLEOTIDE SEQUENCE [LARGE SCALE MRNA] OF 744-1074</scope>
    <source>
        <tissue>Hepatoma</tissue>
    </source>
</reference>
<reference key="6">
    <citation type="journal article" date="2007" name="BMC Genomics">
        <title>The full-ORF clone resource of the German cDNA consortium.</title>
        <authorList>
            <person name="Bechtel S."/>
            <person name="Rosenfelder H."/>
            <person name="Duda A."/>
            <person name="Schmidt C.P."/>
            <person name="Ernst U."/>
            <person name="Wellenreuther R."/>
            <person name="Mehrle A."/>
            <person name="Schuster C."/>
            <person name="Bahr A."/>
            <person name="Bloecker H."/>
            <person name="Heubner D."/>
            <person name="Hoerlein A."/>
            <person name="Michel G."/>
            <person name="Wedler H."/>
            <person name="Koehrer K."/>
            <person name="Ottenwaelder B."/>
            <person name="Poustka A."/>
            <person name="Wiemann S."/>
            <person name="Schupp I."/>
        </authorList>
    </citation>
    <scope>NUCLEOTIDE SEQUENCE [LARGE SCALE MRNA] OF 970-1074</scope>
    <source>
        <tissue>Testis</tissue>
    </source>
</reference>
<reference key="7">
    <citation type="journal article" date="2006" name="Cell">
        <title>Global, in vivo, and site-specific phosphorylation dynamics in signaling networks.</title>
        <authorList>
            <person name="Olsen J.V."/>
            <person name="Blagoev B."/>
            <person name="Gnad F."/>
            <person name="Macek B."/>
            <person name="Kumar C."/>
            <person name="Mortensen P."/>
            <person name="Mann M."/>
        </authorList>
    </citation>
    <scope>PHOSPHORYLATION [LARGE SCALE ANALYSIS] AT SER-1054</scope>
    <scope>IDENTIFICATION BY MASS SPECTROMETRY [LARGE SCALE ANALYSIS]</scope>
    <source>
        <tissue>Cervix carcinoma</tissue>
    </source>
</reference>
<reference key="8">
    <citation type="journal article" date="2008" name="Proc. Natl. Acad. Sci. U.S.A.">
        <title>A quantitative atlas of mitotic phosphorylation.</title>
        <authorList>
            <person name="Dephoure N."/>
            <person name="Zhou C."/>
            <person name="Villen J."/>
            <person name="Beausoleil S.A."/>
            <person name="Bakalarski C.E."/>
            <person name="Elledge S.J."/>
            <person name="Gygi S.P."/>
        </authorList>
    </citation>
    <scope>IDENTIFICATION BY MASS SPECTROMETRY [LARGE SCALE ANALYSIS]</scope>
    <source>
        <tissue>Cervix carcinoma</tissue>
    </source>
</reference>
<reference key="9">
    <citation type="journal article" date="2009" name="Anal. Chem.">
        <title>Lys-N and trypsin cover complementary parts of the phosphoproteome in a refined SCX-based approach.</title>
        <authorList>
            <person name="Gauci S."/>
            <person name="Helbig A.O."/>
            <person name="Slijper M."/>
            <person name="Krijgsveld J."/>
            <person name="Heck A.J."/>
            <person name="Mohammed S."/>
        </authorList>
    </citation>
    <scope>IDENTIFICATION BY MASS SPECTROMETRY [LARGE SCALE ANALYSIS]</scope>
</reference>
<reference key="10">
    <citation type="journal article" date="2009" name="Sci. Signal.">
        <title>Quantitative phosphoproteomic analysis of T cell receptor signaling reveals system-wide modulation of protein-protein interactions.</title>
        <authorList>
            <person name="Mayya V."/>
            <person name="Lundgren D.H."/>
            <person name="Hwang S.-I."/>
            <person name="Rezaul K."/>
            <person name="Wu L."/>
            <person name="Eng J.K."/>
            <person name="Rodionov V."/>
            <person name="Han D.K."/>
        </authorList>
    </citation>
    <scope>PHOSPHORYLATION [LARGE SCALE ANALYSIS] AT SER-1054</scope>
    <scope>IDENTIFICATION BY MASS SPECTROMETRY [LARGE SCALE ANALYSIS]</scope>
    <source>
        <tissue>Leukemic T-cell</tissue>
    </source>
</reference>
<reference key="11">
    <citation type="journal article" date="2009" name="Science">
        <title>Lysine acetylation targets protein complexes and co-regulates major cellular functions.</title>
        <authorList>
            <person name="Choudhary C."/>
            <person name="Kumar C."/>
            <person name="Gnad F."/>
            <person name="Nielsen M.L."/>
            <person name="Rehman M."/>
            <person name="Walther T.C."/>
            <person name="Olsen J.V."/>
            <person name="Mann M."/>
        </authorList>
    </citation>
    <scope>ACETYLATION [LARGE SCALE ANALYSIS] AT LYS-509</scope>
    <scope>IDENTIFICATION BY MASS SPECTROMETRY [LARGE SCALE ANALYSIS]</scope>
</reference>
<reference key="12">
    <citation type="journal article" date="2010" name="Sci. Signal.">
        <title>Quantitative phosphoproteomics reveals widespread full phosphorylation site occupancy during mitosis.</title>
        <authorList>
            <person name="Olsen J.V."/>
            <person name="Vermeulen M."/>
            <person name="Santamaria A."/>
            <person name="Kumar C."/>
            <person name="Miller M.L."/>
            <person name="Jensen L.J."/>
            <person name="Gnad F."/>
            <person name="Cox J."/>
            <person name="Jensen T.S."/>
            <person name="Nigg E.A."/>
            <person name="Brunak S."/>
            <person name="Mann M."/>
        </authorList>
    </citation>
    <scope>IDENTIFICATION BY MASS SPECTROMETRY [LARGE SCALE ANALYSIS]</scope>
    <source>
        <tissue>Cervix carcinoma</tissue>
    </source>
</reference>
<reference key="13">
    <citation type="journal article" date="2011" name="BMC Syst. Biol.">
        <title>Initial characterization of the human central proteome.</title>
        <authorList>
            <person name="Burkard T.R."/>
            <person name="Planyavsky M."/>
            <person name="Kaupe I."/>
            <person name="Breitwieser F.P."/>
            <person name="Buerckstuemmer T."/>
            <person name="Bennett K.L."/>
            <person name="Superti-Furga G."/>
            <person name="Colinge J."/>
        </authorList>
    </citation>
    <scope>IDENTIFICATION BY MASS SPECTROMETRY [LARGE SCALE ANALYSIS]</scope>
</reference>
<reference key="14">
    <citation type="journal article" date="2013" name="J. Proteome Res.">
        <title>Toward a comprehensive characterization of a human cancer cell phosphoproteome.</title>
        <authorList>
            <person name="Zhou H."/>
            <person name="Di Palma S."/>
            <person name="Preisinger C."/>
            <person name="Peng M."/>
            <person name="Polat A.N."/>
            <person name="Heck A.J."/>
            <person name="Mohammed S."/>
        </authorList>
    </citation>
    <scope>PHOSPHORYLATION [LARGE SCALE ANALYSIS] AT SER-1054</scope>
    <scope>IDENTIFICATION BY MASS SPECTROMETRY [LARGE SCALE ANALYSIS]</scope>
    <source>
        <tissue>Cervix carcinoma</tissue>
        <tissue>Erythroleukemia</tissue>
    </source>
</reference>
<reference key="15">
    <citation type="journal article" date="2017" name="Nat. Struct. Mol. Biol.">
        <title>Site-specific mapping of the human SUMO proteome reveals co-modification with phosphorylation.</title>
        <authorList>
            <person name="Hendriks I.A."/>
            <person name="Lyon D."/>
            <person name="Young C."/>
            <person name="Jensen L.J."/>
            <person name="Vertegaal A.C."/>
            <person name="Nielsen M.L."/>
        </authorList>
    </citation>
    <scope>SUMOYLATION [LARGE SCALE ANALYSIS] AT LYS-509; LYS-541 AND LYS-623</scope>
    <scope>IDENTIFICATION BY MASS SPECTROMETRY [LARGE SCALE ANALYSIS]</scope>
</reference>
<reference key="16">
    <citation type="journal article" date="2014" name="Science">
        <title>Exome sequencing links corticospinal motor neuron disease to common neurodegenerative disorders.</title>
        <authorList>
            <person name="Novarino G."/>
            <person name="Fenstermaker A.G."/>
            <person name="Zaki M.S."/>
            <person name="Hofree M."/>
            <person name="Silhavy J.L."/>
            <person name="Heiberg A.D."/>
            <person name="Abdellateef M."/>
            <person name="Rosti B."/>
            <person name="Scott E."/>
            <person name="Mansour L."/>
            <person name="Masri A."/>
            <person name="Kayserili H."/>
            <person name="Al-Aama J.Y."/>
            <person name="Abdel-Salam G.M."/>
            <person name="Karminejad A."/>
            <person name="Kara M."/>
            <person name="Kara B."/>
            <person name="Bozorgmehri B."/>
            <person name="Ben-Omran T."/>
            <person name="Mojahedi F."/>
            <person name="Mahmoud I.G."/>
            <person name="Bouslam N."/>
            <person name="Bouhouche A."/>
            <person name="Benomar A."/>
            <person name="Hanein S."/>
            <person name="Raymond L."/>
            <person name="Forlani S."/>
            <person name="Mascaro M."/>
            <person name="Selim L."/>
            <person name="Shehata N."/>
            <person name="Al-Allawi N."/>
            <person name="Bindu P.S."/>
            <person name="Azam M."/>
            <person name="Gunel M."/>
            <person name="Caglayan A."/>
            <person name="Bilguvar K."/>
            <person name="Tolun A."/>
            <person name="Issa M.Y."/>
            <person name="Schroth J."/>
            <person name="Spencer E.G."/>
            <person name="Rosti R.O."/>
            <person name="Akizu N."/>
            <person name="Vaux K.K."/>
            <person name="Johansen A."/>
            <person name="Koh A.A."/>
            <person name="Megahed H."/>
            <person name="Durr A."/>
            <person name="Brice A."/>
            <person name="Stevanin G."/>
            <person name="Gabriel S.B."/>
            <person name="Ideker T."/>
            <person name="Gleeson J.G."/>
        </authorList>
    </citation>
    <scope>VARIANT PRO-319</scope>
</reference>
<dbReference type="EMBL" id="AJ314790">
    <property type="protein sequence ID" value="CAC40818.1"/>
    <property type="status" value="ALT_SEQ"/>
    <property type="molecule type" value="mRNA"/>
</dbReference>
<dbReference type="EMBL" id="AC008949">
    <property type="status" value="NOT_ANNOTATED_CDS"/>
    <property type="molecule type" value="Genomic_DNA"/>
</dbReference>
<dbReference type="EMBL" id="BC030540">
    <property type="protein sequence ID" value="AAH30540.1"/>
    <property type="status" value="ALT_SEQ"/>
    <property type="molecule type" value="mRNA"/>
</dbReference>
<dbReference type="EMBL" id="BC051893">
    <property type="protein sequence ID" value="AAH51893.1"/>
    <property type="molecule type" value="mRNA"/>
</dbReference>
<dbReference type="EMBL" id="BC062986">
    <property type="protein sequence ID" value="AAH62986.1"/>
    <property type="molecule type" value="mRNA"/>
</dbReference>
<dbReference type="EMBL" id="BC107417">
    <property type="protein sequence ID" value="AAI07418.1"/>
    <property type="status" value="ALT_SEQ"/>
    <property type="molecule type" value="mRNA"/>
</dbReference>
<dbReference type="EMBL" id="BC137084">
    <property type="protein sequence ID" value="AAI37085.1"/>
    <property type="molecule type" value="mRNA"/>
</dbReference>
<dbReference type="EMBL" id="AF100742">
    <property type="protein sequence ID" value="AAD40385.1"/>
    <property type="status" value="ALT_INIT"/>
    <property type="molecule type" value="mRNA"/>
</dbReference>
<dbReference type="EMBL" id="AK025481">
    <property type="protein sequence ID" value="BAB15147.1"/>
    <property type="status" value="ALT_INIT"/>
    <property type="molecule type" value="mRNA"/>
</dbReference>
<dbReference type="EMBL" id="AL137258">
    <property type="protein sequence ID" value="CAB70659.1"/>
    <property type="molecule type" value="mRNA"/>
</dbReference>
<dbReference type="CCDS" id="CCDS34139.1"/>
<dbReference type="PIR" id="T46329">
    <property type="entry name" value="T46329"/>
</dbReference>
<dbReference type="RefSeq" id="NP_057191.2">
    <property type="nucleotide sequence ID" value="NM_016107.4"/>
</dbReference>
<dbReference type="SMR" id="Q96KR1"/>
<dbReference type="BioGRID" id="119667">
    <property type="interactions" value="329"/>
</dbReference>
<dbReference type="DIP" id="DIP-47293N"/>
<dbReference type="FunCoup" id="Q96KR1">
    <property type="interactions" value="3883"/>
</dbReference>
<dbReference type="IntAct" id="Q96KR1">
    <property type="interactions" value="167"/>
</dbReference>
<dbReference type="MINT" id="Q96KR1"/>
<dbReference type="STRING" id="9606.ENSP00000265069"/>
<dbReference type="GlyConnect" id="2868">
    <property type="glycosylation" value="1 O-GlcNAc glycan (4 sites)"/>
</dbReference>
<dbReference type="GlyCosmos" id="Q96KR1">
    <property type="glycosylation" value="54 sites, 2 glycans"/>
</dbReference>
<dbReference type="GlyGen" id="Q96KR1">
    <property type="glycosylation" value="71 sites, 2 O-linked glycans (70 sites)"/>
</dbReference>
<dbReference type="iPTMnet" id="Q96KR1"/>
<dbReference type="MetOSite" id="Q96KR1"/>
<dbReference type="PhosphoSitePlus" id="Q96KR1"/>
<dbReference type="SwissPalm" id="Q96KR1"/>
<dbReference type="BioMuta" id="ZFR"/>
<dbReference type="DMDM" id="162416228"/>
<dbReference type="jPOST" id="Q96KR1"/>
<dbReference type="MassIVE" id="Q96KR1"/>
<dbReference type="PaxDb" id="9606-ENSP00000265069"/>
<dbReference type="PeptideAtlas" id="Q96KR1"/>
<dbReference type="ProteomicsDB" id="77105"/>
<dbReference type="Pumba" id="Q96KR1"/>
<dbReference type="Antibodypedia" id="9796">
    <property type="antibodies" value="72 antibodies from 17 providers"/>
</dbReference>
<dbReference type="DNASU" id="51663"/>
<dbReference type="Ensembl" id="ENST00000265069.13">
    <property type="protein sequence ID" value="ENSP00000265069.8"/>
    <property type="gene ID" value="ENSG00000056097.16"/>
</dbReference>
<dbReference type="GeneID" id="51663"/>
<dbReference type="KEGG" id="hsa:51663"/>
<dbReference type="MANE-Select" id="ENST00000265069.13">
    <property type="protein sequence ID" value="ENSP00000265069.8"/>
    <property type="RefSeq nucleotide sequence ID" value="NM_016107.5"/>
    <property type="RefSeq protein sequence ID" value="NP_057191.2"/>
</dbReference>
<dbReference type="UCSC" id="uc003jhr.2">
    <property type="organism name" value="human"/>
</dbReference>
<dbReference type="AGR" id="HGNC:17277"/>
<dbReference type="CTD" id="51663"/>
<dbReference type="DisGeNET" id="51663"/>
<dbReference type="GeneCards" id="ZFR"/>
<dbReference type="HGNC" id="HGNC:17277">
    <property type="gene designation" value="ZFR"/>
</dbReference>
<dbReference type="HPA" id="ENSG00000056097">
    <property type="expression patterns" value="Low tissue specificity"/>
</dbReference>
<dbReference type="MalaCards" id="ZFR"/>
<dbReference type="MIM" id="615635">
    <property type="type" value="gene"/>
</dbReference>
<dbReference type="neXtProt" id="NX_Q96KR1"/>
<dbReference type="OpenTargets" id="ENSG00000056097"/>
<dbReference type="Orphanet" id="401840">
    <property type="disease" value="Autosomal recessive spastic paraplegia type 71"/>
</dbReference>
<dbReference type="PharmGKB" id="PA38219"/>
<dbReference type="VEuPathDB" id="HostDB:ENSG00000056097"/>
<dbReference type="eggNOG" id="KOG3792">
    <property type="taxonomic scope" value="Eukaryota"/>
</dbReference>
<dbReference type="GeneTree" id="ENSGT00940000155290"/>
<dbReference type="HOGENOM" id="CLU_012026_1_0_1"/>
<dbReference type="InParanoid" id="Q96KR1"/>
<dbReference type="OMA" id="HDYVEEX"/>
<dbReference type="OrthoDB" id="8898434at2759"/>
<dbReference type="PAN-GO" id="Q96KR1">
    <property type="GO annotations" value="2 GO annotations based on evolutionary models"/>
</dbReference>
<dbReference type="PhylomeDB" id="Q96KR1"/>
<dbReference type="TreeFam" id="TF320194"/>
<dbReference type="PathwayCommons" id="Q96KR1"/>
<dbReference type="SignaLink" id="Q96KR1"/>
<dbReference type="BioGRID-ORCS" id="51663">
    <property type="hits" value="167 hits in 1168 CRISPR screens"/>
</dbReference>
<dbReference type="CD-CODE" id="232F8A39">
    <property type="entry name" value="P-body"/>
</dbReference>
<dbReference type="CD-CODE" id="91857CE7">
    <property type="entry name" value="Nucleolus"/>
</dbReference>
<dbReference type="ChiTaRS" id="ZFR">
    <property type="organism name" value="human"/>
</dbReference>
<dbReference type="GenomeRNAi" id="51663"/>
<dbReference type="Pharos" id="Q96KR1">
    <property type="development level" value="Tbio"/>
</dbReference>
<dbReference type="PRO" id="PR:Q96KR1"/>
<dbReference type="Proteomes" id="UP000005640">
    <property type="component" value="Chromosome 5"/>
</dbReference>
<dbReference type="RNAct" id="Q96KR1">
    <property type="molecule type" value="protein"/>
</dbReference>
<dbReference type="Bgee" id="ENSG00000056097">
    <property type="expression patterns" value="Expressed in CA1 field of hippocampus and 216 other cell types or tissues"/>
</dbReference>
<dbReference type="ExpressionAtlas" id="Q96KR1">
    <property type="expression patterns" value="baseline and differential"/>
</dbReference>
<dbReference type="GO" id="GO:0005694">
    <property type="term" value="C:chromosome"/>
    <property type="evidence" value="ECO:0007669"/>
    <property type="project" value="UniProtKB-SubCell"/>
</dbReference>
<dbReference type="GO" id="GO:0005737">
    <property type="term" value="C:cytoplasm"/>
    <property type="evidence" value="ECO:0007669"/>
    <property type="project" value="UniProtKB-SubCell"/>
</dbReference>
<dbReference type="GO" id="GO:0005634">
    <property type="term" value="C:nucleus"/>
    <property type="evidence" value="ECO:0007669"/>
    <property type="project" value="UniProtKB-SubCell"/>
</dbReference>
<dbReference type="GO" id="GO:0003677">
    <property type="term" value="F:DNA binding"/>
    <property type="evidence" value="ECO:0007669"/>
    <property type="project" value="UniProtKB-KW"/>
</dbReference>
<dbReference type="GO" id="GO:0003725">
    <property type="term" value="F:double-stranded RNA binding"/>
    <property type="evidence" value="ECO:0000318"/>
    <property type="project" value="GO_Central"/>
</dbReference>
<dbReference type="GO" id="GO:0003723">
    <property type="term" value="F:RNA binding"/>
    <property type="evidence" value="ECO:0007005"/>
    <property type="project" value="UniProtKB"/>
</dbReference>
<dbReference type="GO" id="GO:0003727">
    <property type="term" value="F:single-stranded RNA binding"/>
    <property type="evidence" value="ECO:0000318"/>
    <property type="project" value="GO_Central"/>
</dbReference>
<dbReference type="GO" id="GO:0008270">
    <property type="term" value="F:zinc ion binding"/>
    <property type="evidence" value="ECO:0007669"/>
    <property type="project" value="InterPro"/>
</dbReference>
<dbReference type="FunFam" id="1.10.1410.40:FF:000001">
    <property type="entry name" value="interleukin enhancer-binding factor 3 isoform X1"/>
    <property type="match status" value="1"/>
</dbReference>
<dbReference type="FunFam" id="3.30.160.60:FF:000153">
    <property type="entry name" value="Zinc finger RNA-binding protein 2"/>
    <property type="match status" value="1"/>
</dbReference>
<dbReference type="FunFam" id="3.30.160.60:FF:000210">
    <property type="entry name" value="Zinc finger RNA-binding protein 2"/>
    <property type="match status" value="1"/>
</dbReference>
<dbReference type="FunFam" id="3.30.160.60:FF:000439">
    <property type="entry name" value="Zinc finger RNA-binding protein 2"/>
    <property type="match status" value="1"/>
</dbReference>
<dbReference type="FunFam" id="3.30.460.10:FF:000010">
    <property type="entry name" value="Zinc finger RNA-binding protein 2"/>
    <property type="match status" value="1"/>
</dbReference>
<dbReference type="Gene3D" id="1.10.1410.40">
    <property type="match status" value="1"/>
</dbReference>
<dbReference type="Gene3D" id="3.30.460.10">
    <property type="entry name" value="Beta Polymerase, domain 2"/>
    <property type="match status" value="1"/>
</dbReference>
<dbReference type="Gene3D" id="3.30.160.60">
    <property type="entry name" value="Classic Zinc Finger"/>
    <property type="match status" value="3"/>
</dbReference>
<dbReference type="InterPro" id="IPR006561">
    <property type="entry name" value="DZF_dom"/>
</dbReference>
<dbReference type="InterPro" id="IPR049402">
    <property type="entry name" value="DZF_dom_C"/>
</dbReference>
<dbReference type="InterPro" id="IPR049401">
    <property type="entry name" value="DZF_dom_N"/>
</dbReference>
<dbReference type="InterPro" id="IPR003604">
    <property type="entry name" value="Matrin/U1-like-C_Znf_C2H2"/>
</dbReference>
<dbReference type="InterPro" id="IPR043519">
    <property type="entry name" value="NT_sf"/>
</dbReference>
<dbReference type="InterPro" id="IPR036236">
    <property type="entry name" value="Znf_C2H2_sf"/>
</dbReference>
<dbReference type="InterPro" id="IPR013087">
    <property type="entry name" value="Znf_C2H2_type"/>
</dbReference>
<dbReference type="PANTHER" id="PTHR45762">
    <property type="entry name" value="ZINC FINGER RNA-BINDING PROTEIN"/>
    <property type="match status" value="1"/>
</dbReference>
<dbReference type="PANTHER" id="PTHR45762:SF21">
    <property type="entry name" value="ZINC FINGER RNA-BINDING PROTEIN"/>
    <property type="match status" value="1"/>
</dbReference>
<dbReference type="Pfam" id="PF20965">
    <property type="entry name" value="DZF_C"/>
    <property type="match status" value="1"/>
</dbReference>
<dbReference type="Pfam" id="PF07528">
    <property type="entry name" value="DZF_N"/>
    <property type="match status" value="1"/>
</dbReference>
<dbReference type="Pfam" id="PF12874">
    <property type="entry name" value="zf-met"/>
    <property type="match status" value="3"/>
</dbReference>
<dbReference type="SMART" id="SM00572">
    <property type="entry name" value="DZF"/>
    <property type="match status" value="1"/>
</dbReference>
<dbReference type="SMART" id="SM00355">
    <property type="entry name" value="ZnF_C2H2"/>
    <property type="match status" value="3"/>
</dbReference>
<dbReference type="SMART" id="SM00451">
    <property type="entry name" value="ZnF_U1"/>
    <property type="match status" value="3"/>
</dbReference>
<dbReference type="SUPFAM" id="SSF57667">
    <property type="entry name" value="beta-beta-alpha zinc fingers"/>
    <property type="match status" value="3"/>
</dbReference>
<dbReference type="PROSITE" id="PS51703">
    <property type="entry name" value="DZF"/>
    <property type="match status" value="1"/>
</dbReference>
<dbReference type="PROSITE" id="PS00028">
    <property type="entry name" value="ZINC_FINGER_C2H2_1"/>
    <property type="match status" value="3"/>
</dbReference>
<accession>Q96KR1</accession>
<accession>B2RNR5</accession>
<accession>Q05C08</accession>
<accession>Q3B7X5</accession>
<accession>Q6P5A3</accession>
<accession>Q86UA0</accession>
<accession>Q9H6V4</accession>
<accession>Q9NTI1</accession>
<accession>Q9Y687</accession>
<name>ZFR_HUMAN</name>
<comment type="function">
    <text evidence="1">Involved in postimplantation and gastrulation stages of development. Involved in the nucleocytoplasmic shuttling of STAU2. Binds to DNA and RNA (By similarity).</text>
</comment>
<comment type="subunit">
    <text evidence="1">Found in a cytoplasmic RNP complex with STAU2. Interacts with STAU2. Does not interact with STAU1 (By similarity).</text>
</comment>
<comment type="interaction">
    <interactant intactId="EBI-2513582">
        <id>Q96KR1</id>
    </interactant>
    <interactant intactId="EBI-1040141">
        <id>Q15796</id>
        <label>SMAD2</label>
    </interactant>
    <organismsDiffer>false</organismsDiffer>
    <experiments>2</experiments>
</comment>
<comment type="subcellular location">
    <subcellularLocation>
        <location evidence="1">Nucleus</location>
    </subcellularLocation>
    <subcellularLocation>
        <location evidence="1">Cytoplasm</location>
    </subcellularLocation>
    <subcellularLocation>
        <location evidence="1">Cytoplasmic granule</location>
    </subcellularLocation>
    <subcellularLocation>
        <location evidence="1">Chromosome</location>
    </subcellularLocation>
    <text evidence="1">Associated with chromosome foci in meiotic cells. Localizes in somatodendritic compartment of primary hippocampal neurons. Colocalizes with STAU2 in several cytosolic RNA granules (By similarity).</text>
</comment>
<comment type="tissue specificity">
    <text evidence="5">Expressed in lung, liver, lymphocytes, heart, pancreas, placenta, brain and kidney.</text>
</comment>
<comment type="sequence caution" evidence="8">
    <conflict type="erroneous initiation">
        <sequence resource="EMBL-CDS" id="AAD40385"/>
    </conflict>
</comment>
<comment type="sequence caution" evidence="8">
    <conflict type="miscellaneous discrepancy">
        <sequence resource="EMBL-CDS" id="AAH30540"/>
    </conflict>
    <text>Contaminating sequence. Potential poly-A sequence.</text>
</comment>
<comment type="sequence caution" evidence="8">
    <conflict type="miscellaneous discrepancy">
        <sequence resource="EMBL-CDS" id="AAI07418"/>
    </conflict>
    <text>Contaminating sequence. Potential poly-A sequence.</text>
</comment>
<comment type="sequence caution" evidence="8">
    <conflict type="erroneous initiation">
        <sequence resource="EMBL-CDS" id="BAB15147"/>
    </conflict>
</comment>
<comment type="sequence caution" evidence="8">
    <conflict type="erroneous initiation">
        <sequence resource="EMBL-CDS" id="CAC40818"/>
    </conflict>
    <text>Truncated N-terminus.</text>
</comment>
<comment type="sequence caution" evidence="8">
    <conflict type="frameshift">
        <sequence resource="EMBL-CDS" id="CAC40818"/>
    </conflict>
</comment>
<gene>
    <name type="primary">ZFR</name>
</gene>
<evidence type="ECO:0000250" key="1"/>
<evidence type="ECO:0000250" key="2">
    <source>
        <dbReference type="UniProtKB" id="O88532"/>
    </source>
</evidence>
<evidence type="ECO:0000255" key="3">
    <source>
        <dbReference type="PROSITE-ProRule" id="PRU01040"/>
    </source>
</evidence>
<evidence type="ECO:0000256" key="4">
    <source>
        <dbReference type="SAM" id="MobiDB-lite"/>
    </source>
</evidence>
<evidence type="ECO:0000269" key="5">
    <source>
    </source>
</evidence>
<evidence type="ECO:0000269" key="6">
    <source>
    </source>
</evidence>
<evidence type="ECO:0000269" key="7">
    <source>
    </source>
</evidence>
<evidence type="ECO:0000305" key="8"/>
<evidence type="ECO:0007744" key="9">
    <source>
    </source>
</evidence>
<evidence type="ECO:0007744" key="10">
    <source>
    </source>
</evidence>
<evidence type="ECO:0007744" key="11">
    <source>
    </source>
</evidence>
<evidence type="ECO:0007744" key="12">
    <source>
    </source>
</evidence>
<evidence type="ECO:0007744" key="13">
    <source>
    </source>
</evidence>
<keyword id="KW-0007">Acetylation</keyword>
<keyword id="KW-0158">Chromosome</keyword>
<keyword id="KW-0963">Cytoplasm</keyword>
<keyword id="KW-0217">Developmental protein</keyword>
<keyword id="KW-0238">DNA-binding</keyword>
<keyword id="KW-1017">Isopeptide bond</keyword>
<keyword id="KW-0539">Nucleus</keyword>
<keyword id="KW-0597">Phosphoprotein</keyword>
<keyword id="KW-1267">Proteomics identification</keyword>
<keyword id="KW-1185">Reference proteome</keyword>
<keyword id="KW-0677">Repeat</keyword>
<keyword id="KW-0694">RNA-binding</keyword>
<keyword id="KW-0832">Ubl conjugation</keyword>
<organism>
    <name type="scientific">Homo sapiens</name>
    <name type="common">Human</name>
    <dbReference type="NCBI Taxonomy" id="9606"/>
    <lineage>
        <taxon>Eukaryota</taxon>
        <taxon>Metazoa</taxon>
        <taxon>Chordata</taxon>
        <taxon>Craniata</taxon>
        <taxon>Vertebrata</taxon>
        <taxon>Euteleostomi</taxon>
        <taxon>Mammalia</taxon>
        <taxon>Eutheria</taxon>
        <taxon>Euarchontoglires</taxon>
        <taxon>Primates</taxon>
        <taxon>Haplorrhini</taxon>
        <taxon>Catarrhini</taxon>
        <taxon>Hominidae</taxon>
        <taxon>Homo</taxon>
    </lineage>
</organism>
<protein>
    <recommendedName>
        <fullName>Zinc finger RNA-binding protein</fullName>
        <shortName>hZFR</shortName>
    </recommendedName>
    <alternativeName>
        <fullName>M-phase phosphoprotein homolog</fullName>
    </alternativeName>
</protein>
<feature type="chain" id="PRO_0000312719" description="Zinc finger RNA-binding protein">
    <location>
        <begin position="1"/>
        <end position="1074"/>
    </location>
</feature>
<feature type="domain" description="DZF" evidence="3">
    <location>
        <begin position="703"/>
        <end position="1073"/>
    </location>
</feature>
<feature type="region of interest" description="Disordered" evidence="4">
    <location>
        <begin position="120"/>
        <end position="139"/>
    </location>
</feature>
<feature type="region of interest" description="Disordered" evidence="4">
    <location>
        <begin position="349"/>
        <end position="377"/>
    </location>
</feature>
<feature type="region of interest" description="Disordered" evidence="4">
    <location>
        <begin position="421"/>
        <end position="447"/>
    </location>
</feature>
<feature type="region of interest" description="Disordered" evidence="4">
    <location>
        <begin position="702"/>
        <end position="723"/>
    </location>
</feature>
<feature type="region of interest" description="Disordered" evidence="4">
    <location>
        <begin position="761"/>
        <end position="781"/>
    </location>
</feature>
<feature type="region of interest" description="Disordered" evidence="4">
    <location>
        <begin position="1040"/>
        <end position="1074"/>
    </location>
</feature>
<feature type="compositionally biased region" description="Low complexity" evidence="4">
    <location>
        <begin position="365"/>
        <end position="377"/>
    </location>
</feature>
<feature type="compositionally biased region" description="Low complexity" evidence="4">
    <location>
        <begin position="427"/>
        <end position="447"/>
    </location>
</feature>
<feature type="compositionally biased region" description="Basic and acidic residues" evidence="4">
    <location>
        <begin position="762"/>
        <end position="781"/>
    </location>
</feature>
<feature type="compositionally biased region" description="Basic and acidic residues" evidence="4">
    <location>
        <begin position="1062"/>
        <end position="1074"/>
    </location>
</feature>
<feature type="modified residue" description="N6-acetyllysine; alternate" evidence="10">
    <location>
        <position position="509"/>
    </location>
</feature>
<feature type="modified residue" description="N6-acetyllysine" evidence="2">
    <location>
        <position position="516"/>
    </location>
</feature>
<feature type="modified residue" description="Phosphoserine" evidence="9 11 12">
    <location>
        <position position="1054"/>
    </location>
</feature>
<feature type="cross-link" description="Glycyl lysine isopeptide (Lys-Gly) (interchain with G-Cter in SUMO2); alternate" evidence="13">
    <location>
        <position position="509"/>
    </location>
</feature>
<feature type="cross-link" description="Glycyl lysine isopeptide (Lys-Gly) (interchain with G-Cter in SUMO2)" evidence="13">
    <location>
        <position position="541"/>
    </location>
</feature>
<feature type="cross-link" description="Glycyl lysine isopeptide (Lys-Gly) (interchain with G-Cter in SUMO2)" evidence="13">
    <location>
        <position position="623"/>
    </location>
</feature>
<feature type="sequence variant" id="VAR_077851" description="Found in a patient with spastic paraplegia; uncertain significance; dbSNP:rs587777203." evidence="7">
    <original>L</original>
    <variation>P</variation>
    <location>
        <position position="319"/>
    </location>
</feature>
<feature type="sequence variant" id="VAR_037554" description="In dbSNP:rs4867440." evidence="6">
    <original>V</original>
    <variation>I</variation>
    <location>
        <position position="461"/>
    </location>
</feature>
<feature type="sequence variant" id="VAR_037555" description="In dbSNP:rs1051489." evidence="6">
    <original>I</original>
    <variation>T</variation>
    <location>
        <position position="520"/>
    </location>
</feature>
<feature type="sequence conflict" description="In Ref. 3; AAI07418." evidence="8" ref="3">
    <original>V</original>
    <variation>I</variation>
    <location>
        <position position="7"/>
    </location>
</feature>
<feature type="sequence conflict" description="In Ref. 4; AAD40385." evidence="8" ref="4">
    <original>E</original>
    <variation>L</variation>
    <location>
        <position position="643"/>
    </location>
</feature>
<feature type="sequence conflict" description="In Ref. 1; CAC40818." evidence="8" ref="1">
    <original>M</original>
    <variation>I</variation>
    <location>
        <position position="659"/>
    </location>
</feature>
<feature type="sequence conflict" description="In Ref. 4; AAD40385." evidence="8" ref="4">
    <original>L</original>
    <variation>F</variation>
    <location>
        <position position="794"/>
    </location>
</feature>
<feature type="sequence conflict" description="In Ref. 4; AAD40385." evidence="8" ref="4">
    <original>V</original>
    <variation>F</variation>
    <location>
        <position position="834"/>
    </location>
</feature>
<feature type="sequence conflict" description="In Ref. 1; CAC40818." evidence="8" ref="1">
    <original>Q</original>
    <variation>QE</variation>
    <location>
        <position position="913"/>
    </location>
</feature>
<feature type="sequence conflict" description="In Ref. 1; CAC40818." evidence="8" ref="1">
    <original>F</original>
    <variation>K</variation>
    <location>
        <position position="1016"/>
    </location>
</feature>